<reference key="1">
    <citation type="journal article" date="1998" name="DNA Res.">
        <title>Complete sequence and gene organization of the genome of a hyper-thermophilic archaebacterium, Pyrococcus horikoshii OT3.</title>
        <authorList>
            <person name="Kawarabayasi Y."/>
            <person name="Sawada M."/>
            <person name="Horikawa H."/>
            <person name="Haikawa Y."/>
            <person name="Hino Y."/>
            <person name="Yamamoto S."/>
            <person name="Sekine M."/>
            <person name="Baba S."/>
            <person name="Kosugi H."/>
            <person name="Hosoyama A."/>
            <person name="Nagai Y."/>
            <person name="Sakai M."/>
            <person name="Ogura K."/>
            <person name="Otsuka R."/>
            <person name="Nakazawa H."/>
            <person name="Takamiya M."/>
            <person name="Ohfuku Y."/>
            <person name="Funahashi T."/>
            <person name="Tanaka T."/>
            <person name="Kudoh Y."/>
            <person name="Yamazaki J."/>
            <person name="Kushida N."/>
            <person name="Oguchi A."/>
            <person name="Aoki K."/>
            <person name="Yoshizawa T."/>
            <person name="Nakamura Y."/>
            <person name="Robb F.T."/>
            <person name="Horikoshi K."/>
            <person name="Masuchi Y."/>
            <person name="Shizuya H."/>
            <person name="Kikuchi H."/>
        </authorList>
    </citation>
    <scope>NUCLEOTIDE SEQUENCE [LARGE SCALE GENOMIC DNA]</scope>
    <source>
        <strain>ATCC 700860 / DSM 12428 / JCM 9974 / NBRC 100139 / OT-3</strain>
    </source>
</reference>
<name>DP2S_PYRHO</name>
<organism>
    <name type="scientific">Pyrococcus horikoshii (strain ATCC 700860 / DSM 12428 / JCM 9974 / NBRC 100139 / OT-3)</name>
    <dbReference type="NCBI Taxonomy" id="70601"/>
    <lineage>
        <taxon>Archaea</taxon>
        <taxon>Methanobacteriati</taxon>
        <taxon>Methanobacteriota</taxon>
        <taxon>Thermococci</taxon>
        <taxon>Thermococcales</taxon>
        <taxon>Thermococcaceae</taxon>
        <taxon>Pyrococcus</taxon>
    </lineage>
</organism>
<dbReference type="EC" id="2.7.7.7"/>
<dbReference type="EC" id="3.1.11.1"/>
<dbReference type="EMBL" id="BA000001">
    <property type="protein sequence ID" value="BAA29192.1"/>
    <property type="molecule type" value="Genomic_DNA"/>
</dbReference>
<dbReference type="PIR" id="A71233">
    <property type="entry name" value="A71233"/>
</dbReference>
<dbReference type="RefSeq" id="WP_010884237.1">
    <property type="nucleotide sequence ID" value="NC_000961.1"/>
</dbReference>
<dbReference type="PDB" id="2KXE">
    <property type="method" value="NMR"/>
    <property type="chains" value="A=1-72"/>
</dbReference>
<dbReference type="PDBsum" id="2KXE"/>
<dbReference type="BMRB" id="O57863"/>
<dbReference type="SMR" id="O57863"/>
<dbReference type="IntAct" id="O57863">
    <property type="interactions" value="1"/>
</dbReference>
<dbReference type="MINT" id="O57863"/>
<dbReference type="STRING" id="70601.gene:9377031"/>
<dbReference type="EnsemblBacteria" id="BAA29192">
    <property type="protein sequence ID" value="BAA29192"/>
    <property type="gene ID" value="BAA29192"/>
</dbReference>
<dbReference type="GeneID" id="1444019"/>
<dbReference type="KEGG" id="pho:PH0123"/>
<dbReference type="eggNOG" id="arCOG04455">
    <property type="taxonomic scope" value="Archaea"/>
</dbReference>
<dbReference type="OrthoDB" id="372039at2157"/>
<dbReference type="EvolutionaryTrace" id="O57863"/>
<dbReference type="Proteomes" id="UP000000752">
    <property type="component" value="Chromosome"/>
</dbReference>
<dbReference type="GO" id="GO:0042575">
    <property type="term" value="C:DNA polymerase complex"/>
    <property type="evidence" value="ECO:0007669"/>
    <property type="project" value="TreeGrafter"/>
</dbReference>
<dbReference type="GO" id="GO:0003677">
    <property type="term" value="F:DNA binding"/>
    <property type="evidence" value="ECO:0007669"/>
    <property type="project" value="UniProtKB-UniRule"/>
</dbReference>
<dbReference type="GO" id="GO:0003887">
    <property type="term" value="F:DNA-directed DNA polymerase activity"/>
    <property type="evidence" value="ECO:0007669"/>
    <property type="project" value="UniProtKB-UniRule"/>
</dbReference>
<dbReference type="GO" id="GO:0008310">
    <property type="term" value="F:single-stranded DNA 3'-5' DNA exonuclease activity"/>
    <property type="evidence" value="ECO:0007669"/>
    <property type="project" value="UniProtKB-EC"/>
</dbReference>
<dbReference type="GO" id="GO:0006308">
    <property type="term" value="P:DNA catabolic process"/>
    <property type="evidence" value="ECO:0007669"/>
    <property type="project" value="UniProtKB-UniRule"/>
</dbReference>
<dbReference type="GO" id="GO:0006271">
    <property type="term" value="P:DNA strand elongation involved in DNA replication"/>
    <property type="evidence" value="ECO:0007669"/>
    <property type="project" value="TreeGrafter"/>
</dbReference>
<dbReference type="CDD" id="cd07386">
    <property type="entry name" value="MPP_DNA_pol_II_small_archeal_C"/>
    <property type="match status" value="1"/>
</dbReference>
<dbReference type="CDD" id="cd04490">
    <property type="entry name" value="PolII_SU_OBF"/>
    <property type="match status" value="1"/>
</dbReference>
<dbReference type="FunFam" id="3.60.21.50:FF:000003">
    <property type="entry name" value="DNA polymerase II small subunit"/>
    <property type="match status" value="1"/>
</dbReference>
<dbReference type="Gene3D" id="3.60.21.50">
    <property type="match status" value="1"/>
</dbReference>
<dbReference type="Gene3D" id="1.10.8.800">
    <property type="entry name" value="D-family DNA polymerase, DP1 subunit N-terminal domain"/>
    <property type="match status" value="1"/>
</dbReference>
<dbReference type="Gene3D" id="2.40.50.140">
    <property type="entry name" value="Nucleic acid-binding proteins"/>
    <property type="match status" value="1"/>
</dbReference>
<dbReference type="HAMAP" id="MF_00325">
    <property type="entry name" value="DNApol_II_A_arch"/>
    <property type="match status" value="1"/>
</dbReference>
<dbReference type="InterPro" id="IPR004843">
    <property type="entry name" value="Calcineurin-like_PHP_ApaH"/>
</dbReference>
<dbReference type="InterPro" id="IPR024826">
    <property type="entry name" value="DNA_pol_delta/II_ssu"/>
</dbReference>
<dbReference type="InterPro" id="IPR029052">
    <property type="entry name" value="Metallo-depent_PP-like"/>
</dbReference>
<dbReference type="InterPro" id="IPR012340">
    <property type="entry name" value="NA-bd_OB-fold"/>
</dbReference>
<dbReference type="InterPro" id="IPR011149">
    <property type="entry name" value="Pol2_small_arc"/>
</dbReference>
<dbReference type="InterPro" id="IPR054750">
    <property type="entry name" value="PolB_N"/>
</dbReference>
<dbReference type="NCBIfam" id="NF003117">
    <property type="entry name" value="PRK04036.1-2"/>
    <property type="match status" value="1"/>
</dbReference>
<dbReference type="NCBIfam" id="NF003118">
    <property type="entry name" value="PRK04036.1-3"/>
    <property type="match status" value="1"/>
</dbReference>
<dbReference type="PANTHER" id="PTHR10416">
    <property type="entry name" value="DNA POLYMERASE DELTA SUBUNIT 2"/>
    <property type="match status" value="1"/>
</dbReference>
<dbReference type="PANTHER" id="PTHR10416:SF0">
    <property type="entry name" value="DNA POLYMERASE DELTA SUBUNIT 2"/>
    <property type="match status" value="1"/>
</dbReference>
<dbReference type="Pfam" id="PF00149">
    <property type="entry name" value="Metallophos"/>
    <property type="match status" value="1"/>
</dbReference>
<dbReference type="Pfam" id="PF22317">
    <property type="entry name" value="PolB_N"/>
    <property type="match status" value="1"/>
</dbReference>
<dbReference type="PIRSF" id="PIRSF000803">
    <property type="entry name" value="Arc_Pol2_small"/>
    <property type="match status" value="1"/>
</dbReference>
<dbReference type="SUPFAM" id="SSF56300">
    <property type="entry name" value="Metallo-dependent phosphatases"/>
    <property type="match status" value="1"/>
</dbReference>
<protein>
    <recommendedName>
        <fullName>DNA polymerase II small subunit</fullName>
        <shortName>Pol II</shortName>
        <ecNumber>2.7.7.7</ecNumber>
    </recommendedName>
    <alternativeName>
        <fullName>Exodeoxyribonuclease small subunit</fullName>
        <ecNumber>3.1.11.1</ecNumber>
    </alternativeName>
</protein>
<evidence type="ECO:0000250" key="1"/>
<evidence type="ECO:0000256" key="2">
    <source>
        <dbReference type="SAM" id="MobiDB-lite"/>
    </source>
</evidence>
<evidence type="ECO:0000305" key="3"/>
<evidence type="ECO:0007829" key="4">
    <source>
        <dbReference type="PDB" id="2KXE"/>
    </source>
</evidence>
<comment type="function">
    <text evidence="1">Possesses two activities: a DNA synthesis (polymerase) and an exonucleolytic activity that degrades single-stranded DNA in the 3' to 5' direction. Has a template-primer preference which is characteristic of a replicative DNA polymerase (By similarity).</text>
</comment>
<comment type="catalytic activity">
    <reaction>
        <text>DNA(n) + a 2'-deoxyribonucleoside 5'-triphosphate = DNA(n+1) + diphosphate</text>
        <dbReference type="Rhea" id="RHEA:22508"/>
        <dbReference type="Rhea" id="RHEA-COMP:17339"/>
        <dbReference type="Rhea" id="RHEA-COMP:17340"/>
        <dbReference type="ChEBI" id="CHEBI:33019"/>
        <dbReference type="ChEBI" id="CHEBI:61560"/>
        <dbReference type="ChEBI" id="CHEBI:173112"/>
        <dbReference type="EC" id="2.7.7.7"/>
    </reaction>
</comment>
<comment type="catalytic activity">
    <reaction>
        <text>Exonucleolytic cleavage in the 3'- to 5'-direction to yield nucleoside 5'-phosphates.</text>
        <dbReference type="EC" id="3.1.11.1"/>
    </reaction>
</comment>
<comment type="subunit">
    <text evidence="1">Heterodimer of a large subunit and a small subunit.</text>
</comment>
<comment type="similarity">
    <text evidence="3">Belongs to the DNA polymerase delta/II small subunit family.</text>
</comment>
<sequence length="622" mass="70283">MDEFVKGLMKNGYLITPSAYYLLVGHFNEGKFSLIELIKFAKSRETFIIDDEIANEFLKSIGAEVELPQEIKEGYISTGEGSQKVPDHEELEKITNESSVESSISTGETPKTEELQPTLDILEEEIGDIEGGESSISTGDEVPEVENNNGGTVVVFDKYGYPFTYVPEEIEEELEEYPKYEDVTIEINPNLEVVPIEKDYEIKFDVRRVKLKPPKVKSGSGKEGEIIVEAYASLFRSRLRKLRRILRENPEVSNVIDIKKLKYVKGDEEVTIIGLVNSKKETSKGLIFEVEDQTDRVKVFLPKDSEDYREALKVLPDAVVAFKGVYSKRGIFFANRFYLPDVPLYRKQKPPLEEKVYAVLTSDIHVGSKEFCEKAFIKFLEWLNGYVESKEEEEIVSRIRYLIIAGDVVDGIGIYPGQYSDLIIPDIFDQYEALANLLSNVPKHITIFIGPGNHDAARPAIPQPEFYEEYAKPLYKLKNTVIISNPAVIRLHGRDFLIAHGRGIEDVVSFVPGLTHHKPGLPMVELLKMRHLAPTFGGKVPIAPDPEDLLVIEEVPDLVQMGHVHVYDTAVYRGVQLVNSATWQAQTEFQKMVNIVPTPGLVPIVDVESARVIKVLDFSRWC</sequence>
<feature type="chain" id="PRO_0000096181" description="DNA polymerase II small subunit">
    <location>
        <begin position="1"/>
        <end position="622"/>
    </location>
</feature>
<feature type="region of interest" description="Disordered" evidence="2">
    <location>
        <begin position="76"/>
        <end position="113"/>
    </location>
</feature>
<feature type="compositionally biased region" description="Basic and acidic residues" evidence="2">
    <location>
        <begin position="85"/>
        <end position="95"/>
    </location>
</feature>
<feature type="compositionally biased region" description="Polar residues" evidence="2">
    <location>
        <begin position="96"/>
        <end position="109"/>
    </location>
</feature>
<feature type="helix" evidence="4">
    <location>
        <begin position="3"/>
        <end position="9"/>
    </location>
</feature>
<feature type="turn" evidence="4">
    <location>
        <begin position="10"/>
        <end position="12"/>
    </location>
</feature>
<feature type="helix" evidence="4">
    <location>
        <begin position="17"/>
        <end position="28"/>
    </location>
</feature>
<feature type="helix" evidence="4">
    <location>
        <begin position="34"/>
        <end position="44"/>
    </location>
</feature>
<feature type="strand" evidence="4">
    <location>
        <begin position="47"/>
        <end position="49"/>
    </location>
</feature>
<feature type="helix" evidence="4">
    <location>
        <begin position="51"/>
        <end position="61"/>
    </location>
</feature>
<proteinExistence type="evidence at protein level"/>
<gene>
    <name type="primary">polB</name>
    <name type="ordered locus">PH0123</name>
</gene>
<keyword id="KW-0002">3D-structure</keyword>
<keyword id="KW-0235">DNA replication</keyword>
<keyword id="KW-0238">DNA-binding</keyword>
<keyword id="KW-0239">DNA-directed DNA polymerase</keyword>
<keyword id="KW-0269">Exonuclease</keyword>
<keyword id="KW-0378">Hydrolase</keyword>
<keyword id="KW-0511">Multifunctional enzyme</keyword>
<keyword id="KW-0540">Nuclease</keyword>
<keyword id="KW-0548">Nucleotidyltransferase</keyword>
<keyword id="KW-0808">Transferase</keyword>
<accession>O57863</accession>